<sequence length="179" mass="17709">MKSLLSTLVIIMFLAHLVTGGWYVKKCANTLGNCRKMCRDGEKQTEPATSKCPIGKLCCVLDFKISGHCGGGGQNSDNLVTAGGDEGSSAKASTAAMVGAAAMAGTPTKTSAPAKTSAPAKTSTTTKASNAAKASTTTKASNAAKASAATMAGNTTKVSTAAIASTPAQASTPTKANST</sequence>
<name>DFB22_MOUSE</name>
<protein>
    <recommendedName>
        <fullName evidence="6 11">Beta-defensin 22</fullName>
        <shortName evidence="6 11">Defb22</shortName>
    </recommendedName>
</protein>
<dbReference type="EMBL" id="DQ012033">
    <property type="protein sequence ID" value="AAY59769.1"/>
    <property type="molecule type" value="mRNA"/>
</dbReference>
<dbReference type="EMBL" id="AK078980">
    <property type="protein sequence ID" value="BAC37493.1"/>
    <property type="molecule type" value="mRNA"/>
</dbReference>
<dbReference type="EMBL" id="AL844517">
    <property type="status" value="NOT_ANNOTATED_CDS"/>
    <property type="molecule type" value="Genomic_DNA"/>
</dbReference>
<dbReference type="EMBL" id="BC139230">
    <property type="protein sequence ID" value="AAI39231.1"/>
    <property type="molecule type" value="mRNA"/>
</dbReference>
<dbReference type="EMBL" id="BC145928">
    <property type="protein sequence ID" value="AAI45929.1"/>
    <property type="molecule type" value="mRNA"/>
</dbReference>
<dbReference type="CCDS" id="CCDS16887.1"/>
<dbReference type="RefSeq" id="NP_001002791.1">
    <property type="nucleotide sequence ID" value="NM_001002791.2"/>
</dbReference>
<dbReference type="SMR" id="Q8BVC1"/>
<dbReference type="STRING" id="10090.ENSMUSP00000028966"/>
<dbReference type="PaxDb" id="10090-ENSMUSP00000028966"/>
<dbReference type="ProteomicsDB" id="279379"/>
<dbReference type="DNASU" id="442835"/>
<dbReference type="Ensembl" id="ENSMUST00000028966.3">
    <property type="protein sequence ID" value="ENSMUSP00000028966.3"/>
    <property type="gene ID" value="ENSMUSG00000027468.3"/>
</dbReference>
<dbReference type="GeneID" id="442835"/>
<dbReference type="KEGG" id="mmu:442835"/>
<dbReference type="UCSC" id="uc008nfn.1">
    <property type="organism name" value="mouse"/>
</dbReference>
<dbReference type="AGR" id="MGI:3045368"/>
<dbReference type="CTD" id="442835"/>
<dbReference type="MGI" id="MGI:3045368">
    <property type="gene designation" value="Defb22"/>
</dbReference>
<dbReference type="VEuPathDB" id="HostDB:ENSMUSG00000027468"/>
<dbReference type="eggNOG" id="ENOG502TDX7">
    <property type="taxonomic scope" value="Eukaryota"/>
</dbReference>
<dbReference type="GeneTree" id="ENSGT00940000167063"/>
<dbReference type="HOGENOM" id="CLU_1503004_0_0_1"/>
<dbReference type="InParanoid" id="Q8BVC1"/>
<dbReference type="OrthoDB" id="9748237at2759"/>
<dbReference type="PhylomeDB" id="Q8BVC1"/>
<dbReference type="BioGRID-ORCS" id="442835">
    <property type="hits" value="2 hits in 76 CRISPR screens"/>
</dbReference>
<dbReference type="PRO" id="PR:Q8BVC1"/>
<dbReference type="Proteomes" id="UP000000589">
    <property type="component" value="Chromosome 2"/>
</dbReference>
<dbReference type="RNAct" id="Q8BVC1">
    <property type="molecule type" value="protein"/>
</dbReference>
<dbReference type="Bgee" id="ENSMUSG00000027468">
    <property type="expression patterns" value="Expressed in blastoderm cell in morula and 2 other cell types or tissues"/>
</dbReference>
<dbReference type="GO" id="GO:0001669">
    <property type="term" value="C:acrosomal vesicle"/>
    <property type="evidence" value="ECO:0007669"/>
    <property type="project" value="UniProtKB-SubCell"/>
</dbReference>
<dbReference type="GO" id="GO:0009986">
    <property type="term" value="C:cell surface"/>
    <property type="evidence" value="ECO:0000314"/>
    <property type="project" value="MGI"/>
</dbReference>
<dbReference type="GO" id="GO:0005576">
    <property type="term" value="C:extracellular region"/>
    <property type="evidence" value="ECO:0007669"/>
    <property type="project" value="UniProtKB-SubCell"/>
</dbReference>
<dbReference type="GO" id="GO:0120238">
    <property type="term" value="C:sperm glycocalyx"/>
    <property type="evidence" value="ECO:0000314"/>
    <property type="project" value="MGI"/>
</dbReference>
<dbReference type="GO" id="GO:0045087">
    <property type="term" value="P:innate immune response"/>
    <property type="evidence" value="ECO:0007669"/>
    <property type="project" value="InterPro"/>
</dbReference>
<dbReference type="InterPro" id="IPR025933">
    <property type="entry name" value="Beta_defensin_dom"/>
</dbReference>
<dbReference type="Pfam" id="PF13841">
    <property type="entry name" value="Defensin_beta_2"/>
    <property type="match status" value="1"/>
</dbReference>
<gene>
    <name evidence="11" type="primary">Defb22</name>
</gene>
<reference evidence="9" key="1">
    <citation type="journal article" date="2005" name="Physiol. Genomics">
        <title>Cross-species analysis of the mammalian beta-defensin gene family: presence of syntenic gene clusters and preferential expression in the male reproductive tract.</title>
        <authorList>
            <person name="Patil A.A."/>
            <person name="Cai Y."/>
            <person name="Sang Y."/>
            <person name="Blecha F."/>
            <person name="Zhang G."/>
        </authorList>
    </citation>
    <scope>NUCLEOTIDE SEQUENCE [MRNA]</scope>
</reference>
<reference evidence="10" key="2">
    <citation type="journal article" date="2005" name="Science">
        <title>The transcriptional landscape of the mammalian genome.</title>
        <authorList>
            <person name="Carninci P."/>
            <person name="Kasukawa T."/>
            <person name="Katayama S."/>
            <person name="Gough J."/>
            <person name="Frith M.C."/>
            <person name="Maeda N."/>
            <person name="Oyama R."/>
            <person name="Ravasi T."/>
            <person name="Lenhard B."/>
            <person name="Wells C."/>
            <person name="Kodzius R."/>
            <person name="Shimokawa K."/>
            <person name="Bajic V.B."/>
            <person name="Brenner S.E."/>
            <person name="Batalov S."/>
            <person name="Forrest A.R."/>
            <person name="Zavolan M."/>
            <person name="Davis M.J."/>
            <person name="Wilming L.G."/>
            <person name="Aidinis V."/>
            <person name="Allen J.E."/>
            <person name="Ambesi-Impiombato A."/>
            <person name="Apweiler R."/>
            <person name="Aturaliya R.N."/>
            <person name="Bailey T.L."/>
            <person name="Bansal M."/>
            <person name="Baxter L."/>
            <person name="Beisel K.W."/>
            <person name="Bersano T."/>
            <person name="Bono H."/>
            <person name="Chalk A.M."/>
            <person name="Chiu K.P."/>
            <person name="Choudhary V."/>
            <person name="Christoffels A."/>
            <person name="Clutterbuck D.R."/>
            <person name="Crowe M.L."/>
            <person name="Dalla E."/>
            <person name="Dalrymple B.P."/>
            <person name="de Bono B."/>
            <person name="Della Gatta G."/>
            <person name="di Bernardo D."/>
            <person name="Down T."/>
            <person name="Engstrom P."/>
            <person name="Fagiolini M."/>
            <person name="Faulkner G."/>
            <person name="Fletcher C.F."/>
            <person name="Fukushima T."/>
            <person name="Furuno M."/>
            <person name="Futaki S."/>
            <person name="Gariboldi M."/>
            <person name="Georgii-Hemming P."/>
            <person name="Gingeras T.R."/>
            <person name="Gojobori T."/>
            <person name="Green R.E."/>
            <person name="Gustincich S."/>
            <person name="Harbers M."/>
            <person name="Hayashi Y."/>
            <person name="Hensch T.K."/>
            <person name="Hirokawa N."/>
            <person name="Hill D."/>
            <person name="Huminiecki L."/>
            <person name="Iacono M."/>
            <person name="Ikeo K."/>
            <person name="Iwama A."/>
            <person name="Ishikawa T."/>
            <person name="Jakt M."/>
            <person name="Kanapin A."/>
            <person name="Katoh M."/>
            <person name="Kawasawa Y."/>
            <person name="Kelso J."/>
            <person name="Kitamura H."/>
            <person name="Kitano H."/>
            <person name="Kollias G."/>
            <person name="Krishnan S.P."/>
            <person name="Kruger A."/>
            <person name="Kummerfeld S.K."/>
            <person name="Kurochkin I.V."/>
            <person name="Lareau L.F."/>
            <person name="Lazarevic D."/>
            <person name="Lipovich L."/>
            <person name="Liu J."/>
            <person name="Liuni S."/>
            <person name="McWilliam S."/>
            <person name="Madan Babu M."/>
            <person name="Madera M."/>
            <person name="Marchionni L."/>
            <person name="Matsuda H."/>
            <person name="Matsuzawa S."/>
            <person name="Miki H."/>
            <person name="Mignone F."/>
            <person name="Miyake S."/>
            <person name="Morris K."/>
            <person name="Mottagui-Tabar S."/>
            <person name="Mulder N."/>
            <person name="Nakano N."/>
            <person name="Nakauchi H."/>
            <person name="Ng P."/>
            <person name="Nilsson R."/>
            <person name="Nishiguchi S."/>
            <person name="Nishikawa S."/>
            <person name="Nori F."/>
            <person name="Ohara O."/>
            <person name="Okazaki Y."/>
            <person name="Orlando V."/>
            <person name="Pang K.C."/>
            <person name="Pavan W.J."/>
            <person name="Pavesi G."/>
            <person name="Pesole G."/>
            <person name="Petrovsky N."/>
            <person name="Piazza S."/>
            <person name="Reed J."/>
            <person name="Reid J.F."/>
            <person name="Ring B.Z."/>
            <person name="Ringwald M."/>
            <person name="Rost B."/>
            <person name="Ruan Y."/>
            <person name="Salzberg S.L."/>
            <person name="Sandelin A."/>
            <person name="Schneider C."/>
            <person name="Schoenbach C."/>
            <person name="Sekiguchi K."/>
            <person name="Semple C.A."/>
            <person name="Seno S."/>
            <person name="Sessa L."/>
            <person name="Sheng Y."/>
            <person name="Shibata Y."/>
            <person name="Shimada H."/>
            <person name="Shimada K."/>
            <person name="Silva D."/>
            <person name="Sinclair B."/>
            <person name="Sperling S."/>
            <person name="Stupka E."/>
            <person name="Sugiura K."/>
            <person name="Sultana R."/>
            <person name="Takenaka Y."/>
            <person name="Taki K."/>
            <person name="Tammoja K."/>
            <person name="Tan S.L."/>
            <person name="Tang S."/>
            <person name="Taylor M.S."/>
            <person name="Tegner J."/>
            <person name="Teichmann S.A."/>
            <person name="Ueda H.R."/>
            <person name="van Nimwegen E."/>
            <person name="Verardo R."/>
            <person name="Wei C.L."/>
            <person name="Yagi K."/>
            <person name="Yamanishi H."/>
            <person name="Zabarovsky E."/>
            <person name="Zhu S."/>
            <person name="Zimmer A."/>
            <person name="Hide W."/>
            <person name="Bult C."/>
            <person name="Grimmond S.M."/>
            <person name="Teasdale R.D."/>
            <person name="Liu E.T."/>
            <person name="Brusic V."/>
            <person name="Quackenbush J."/>
            <person name="Wahlestedt C."/>
            <person name="Mattick J.S."/>
            <person name="Hume D.A."/>
            <person name="Kai C."/>
            <person name="Sasaki D."/>
            <person name="Tomaru Y."/>
            <person name="Fukuda S."/>
            <person name="Kanamori-Katayama M."/>
            <person name="Suzuki M."/>
            <person name="Aoki J."/>
            <person name="Arakawa T."/>
            <person name="Iida J."/>
            <person name="Imamura K."/>
            <person name="Itoh M."/>
            <person name="Kato T."/>
            <person name="Kawaji H."/>
            <person name="Kawagashira N."/>
            <person name="Kawashima T."/>
            <person name="Kojima M."/>
            <person name="Kondo S."/>
            <person name="Konno H."/>
            <person name="Nakano K."/>
            <person name="Ninomiya N."/>
            <person name="Nishio T."/>
            <person name="Okada M."/>
            <person name="Plessy C."/>
            <person name="Shibata K."/>
            <person name="Shiraki T."/>
            <person name="Suzuki S."/>
            <person name="Tagami M."/>
            <person name="Waki K."/>
            <person name="Watahiki A."/>
            <person name="Okamura-Oho Y."/>
            <person name="Suzuki H."/>
            <person name="Kawai J."/>
            <person name="Hayashizaki Y."/>
        </authorList>
    </citation>
    <scope>NUCLEOTIDE SEQUENCE [LARGE SCALE MRNA]</scope>
    <source>
        <strain evidence="10">C57BL/6J</strain>
        <tissue evidence="10">Epididymis</tissue>
    </source>
</reference>
<reference evidence="12" key="3">
    <citation type="journal article" date="2009" name="PLoS Biol.">
        <title>Lineage-specific biology revealed by a finished genome assembly of the mouse.</title>
        <authorList>
            <person name="Church D.M."/>
            <person name="Goodstadt L."/>
            <person name="Hillier L.W."/>
            <person name="Zody M.C."/>
            <person name="Goldstein S."/>
            <person name="She X."/>
            <person name="Bult C.J."/>
            <person name="Agarwala R."/>
            <person name="Cherry J.L."/>
            <person name="DiCuccio M."/>
            <person name="Hlavina W."/>
            <person name="Kapustin Y."/>
            <person name="Meric P."/>
            <person name="Maglott D."/>
            <person name="Birtle Z."/>
            <person name="Marques A.C."/>
            <person name="Graves T."/>
            <person name="Zhou S."/>
            <person name="Teague B."/>
            <person name="Potamousis K."/>
            <person name="Churas C."/>
            <person name="Place M."/>
            <person name="Herschleb J."/>
            <person name="Runnheim R."/>
            <person name="Forrest D."/>
            <person name="Amos-Landgraf J."/>
            <person name="Schwartz D.C."/>
            <person name="Cheng Z."/>
            <person name="Lindblad-Toh K."/>
            <person name="Eichler E.E."/>
            <person name="Ponting C.P."/>
        </authorList>
    </citation>
    <scope>NUCLEOTIDE SEQUENCE [LARGE SCALE GENOMIC DNA]</scope>
    <source>
        <strain evidence="12">C57BL/6J</strain>
    </source>
</reference>
<reference evidence="8" key="4">
    <citation type="journal article" date="2004" name="Genome Res.">
        <title>The status, quality, and expansion of the NIH full-length cDNA project: the Mammalian Gene Collection (MGC).</title>
        <authorList>
            <consortium name="The MGC Project Team"/>
        </authorList>
    </citation>
    <scope>NUCLEOTIDE SEQUENCE [LARGE SCALE MRNA]</scope>
    <source>
        <tissue evidence="8">Brain</tissue>
    </source>
</reference>
<reference evidence="7" key="5">
    <citation type="journal article" date="2008" name="Reproduction">
        <title>Beta-defensin 22 is a major component of the mouse sperm glycocalyx.</title>
        <authorList>
            <person name="Yudin A.I."/>
            <person name="Tollner T.L."/>
            <person name="Treece C.A."/>
            <person name="Kays R."/>
            <person name="Cherr G.N."/>
            <person name="Overstreet J.W."/>
            <person name="Bevins C.L."/>
        </authorList>
    </citation>
    <scope>FUNCTION</scope>
    <scope>SUBCELLULAR LOCATION</scope>
    <scope>TISSUE SPECIFICITY</scope>
</reference>
<comment type="function">
    <text evidence="5">Probable component of sperm glycocalyx. Likely protects and facilitates transport of sperm in the female reproductive tract. Probably released from the sperm surface during capacitation.</text>
</comment>
<comment type="subcellular location">
    <subcellularLocation>
        <location evidence="5">Cytoplasmic vesicle</location>
        <location evidence="5">Secretory vesicle</location>
        <location evidence="5">Acrosome</location>
    </subcellularLocation>
    <subcellularLocation>
        <location evidence="5">Secreted</location>
        <location evidence="5">Extracellular space</location>
    </subcellularLocation>
    <text evidence="5">In the corpus epididymis, located in vesicles below the apical surface of the plasma membrane. Secreted by epididymal cells and absorbed to the surface of sperm during transit through the epididymis. Coats the entire surface of ejaculated sperm although presence on the equatorial segment is less intense.</text>
</comment>
<comment type="tissue specificity">
    <text evidence="5">Specifically expressed in corpus epididymis and cauda epididymis with expression in corpus being highest (at protein level). Not detected in other tissues tested, including testis, prostate, seminal vesicle and vas deferens (at protein level).</text>
</comment>
<comment type="PTM">
    <text evidence="2">O-glycosylated; glycans contain alpha(2,3)-linked sialic acids.</text>
</comment>
<comment type="similarity">
    <text evidence="7">Belongs to the beta-defensin family.</text>
</comment>
<accession>Q8BVC1</accession>
<keyword id="KW-0968">Cytoplasmic vesicle</keyword>
<keyword id="KW-1015">Disulfide bond</keyword>
<keyword id="KW-0325">Glycoprotein</keyword>
<keyword id="KW-1185">Reference proteome</keyword>
<keyword id="KW-0964">Secreted</keyword>
<keyword id="KW-0732">Signal</keyword>
<feature type="signal peptide" evidence="3">
    <location>
        <begin position="1"/>
        <end position="20"/>
    </location>
</feature>
<feature type="chain" id="PRO_5007953120" description="Beta-defensin 22">
    <location>
        <begin position="21"/>
        <end position="179"/>
    </location>
</feature>
<feature type="region of interest" description="Disordered" evidence="4">
    <location>
        <begin position="105"/>
        <end position="152"/>
    </location>
</feature>
<feature type="compositionally biased region" description="Low complexity" evidence="4">
    <location>
        <begin position="105"/>
        <end position="150"/>
    </location>
</feature>
<feature type="disulfide bond" evidence="1">
    <location>
        <begin position="27"/>
        <end position="58"/>
    </location>
</feature>
<feature type="disulfide bond" evidence="1">
    <location>
        <begin position="34"/>
        <end position="52"/>
    </location>
</feature>
<feature type="disulfide bond" evidence="1">
    <location>
        <begin position="38"/>
        <end position="59"/>
    </location>
</feature>
<evidence type="ECO:0000250" key="1">
    <source>
        <dbReference type="UniProtKB" id="Q91V82"/>
    </source>
</evidence>
<evidence type="ECO:0000250" key="2">
    <source>
        <dbReference type="UniProtKB" id="Q9BYW3"/>
    </source>
</evidence>
<evidence type="ECO:0000255" key="3"/>
<evidence type="ECO:0000256" key="4">
    <source>
        <dbReference type="SAM" id="MobiDB-lite"/>
    </source>
</evidence>
<evidence type="ECO:0000269" key="5">
    <source>
    </source>
</evidence>
<evidence type="ECO:0000303" key="6">
    <source>
    </source>
</evidence>
<evidence type="ECO:0000305" key="7"/>
<evidence type="ECO:0000312" key="8">
    <source>
        <dbReference type="EMBL" id="AAI39231.1"/>
    </source>
</evidence>
<evidence type="ECO:0000312" key="9">
    <source>
        <dbReference type="EMBL" id="AAY59769.1"/>
    </source>
</evidence>
<evidence type="ECO:0000312" key="10">
    <source>
        <dbReference type="EMBL" id="BAC37493.1"/>
    </source>
</evidence>
<evidence type="ECO:0000312" key="11">
    <source>
        <dbReference type="MGI" id="MGI:3045368"/>
    </source>
</evidence>
<evidence type="ECO:0000312" key="12">
    <source>
        <dbReference type="Proteomes" id="UP000000589"/>
    </source>
</evidence>
<proteinExistence type="evidence at protein level"/>
<organism evidence="9">
    <name type="scientific">Mus musculus</name>
    <name type="common">Mouse</name>
    <dbReference type="NCBI Taxonomy" id="10090"/>
    <lineage>
        <taxon>Eukaryota</taxon>
        <taxon>Metazoa</taxon>
        <taxon>Chordata</taxon>
        <taxon>Craniata</taxon>
        <taxon>Vertebrata</taxon>
        <taxon>Euteleostomi</taxon>
        <taxon>Mammalia</taxon>
        <taxon>Eutheria</taxon>
        <taxon>Euarchontoglires</taxon>
        <taxon>Glires</taxon>
        <taxon>Rodentia</taxon>
        <taxon>Myomorpha</taxon>
        <taxon>Muroidea</taxon>
        <taxon>Muridae</taxon>
        <taxon>Murinae</taxon>
        <taxon>Mus</taxon>
        <taxon>Mus</taxon>
    </lineage>
</organism>